<proteinExistence type="inferred from homology"/>
<gene>
    <name evidence="1" type="primary">prfC</name>
    <name type="ordered locus">NMA0836</name>
</gene>
<protein>
    <recommendedName>
        <fullName evidence="1">Peptide chain release factor 3</fullName>
        <shortName evidence="1">RF-3</shortName>
    </recommendedName>
</protein>
<accession>Q9JVH7</accession>
<accession>A1IQP0</accession>
<feature type="chain" id="PRO_0000210950" description="Peptide chain release factor 3">
    <location>
        <begin position="1"/>
        <end position="531"/>
    </location>
</feature>
<feature type="domain" description="tr-type G">
    <location>
        <begin position="10"/>
        <end position="278"/>
    </location>
</feature>
<feature type="binding site" evidence="1">
    <location>
        <begin position="19"/>
        <end position="26"/>
    </location>
    <ligand>
        <name>GTP</name>
        <dbReference type="ChEBI" id="CHEBI:37565"/>
    </ligand>
</feature>
<feature type="binding site" evidence="1">
    <location>
        <begin position="87"/>
        <end position="91"/>
    </location>
    <ligand>
        <name>GTP</name>
        <dbReference type="ChEBI" id="CHEBI:37565"/>
    </ligand>
</feature>
<feature type="binding site" evidence="1">
    <location>
        <begin position="141"/>
        <end position="144"/>
    </location>
    <ligand>
        <name>GTP</name>
        <dbReference type="ChEBI" id="CHEBI:37565"/>
    </ligand>
</feature>
<evidence type="ECO:0000255" key="1">
    <source>
        <dbReference type="HAMAP-Rule" id="MF_00072"/>
    </source>
</evidence>
<comment type="function">
    <text evidence="1">Increases the formation of ribosomal termination complexes and stimulates activities of RF-1 and RF-2. It binds guanine nucleotides and has strong preference for UGA stop codons. It may interact directly with the ribosome. The stimulation of RF-1 and RF-2 is significantly reduced by GTP and GDP, but not by GMP.</text>
</comment>
<comment type="subcellular location">
    <subcellularLocation>
        <location evidence="1">Cytoplasm</location>
    </subcellularLocation>
</comment>
<comment type="similarity">
    <text evidence="1">Belongs to the TRAFAC class translation factor GTPase superfamily. Classic translation factor GTPase family. PrfC subfamily.</text>
</comment>
<sequence length="531" mass="59644">MSQEILDQVRRRRTFAIISHPDAGKTTLTEKLLLFSGAIQSAGTVKGKKTGKFATSDWMDIEKQRGISVASSVMQFDYKDHTVNLLDTPGHQDFSEDTYRVLTAVDSALMVIDAAKGVEAQTIKLLNVCRLRNTPIVTFMNKYDREVRDSLELLDEVENILQIRCAPVTWPIGMGKNFKGVYHILNDEIYLFEAGGERLPHEFDIIKGIDNPELEQRFPLEIQQLRDEIELVQAASNEFNLDEFLAGELTPVFFGSAINNFGIQEILNSLIEWAPAPKPRDATVRMVEPDEPKFSGFIFKIQANMDPKHRDRIAFLRVCSGKFERGMKMKHLRINREIAASSVVTFMSHDRELVEEAYAGDIIGIPNHGNIQIGDSFSEGEQLTFTGIPFFAPELFRSVRIKNPLKIKQLQKGLQQLGEEGAVQVFKPMSGADLILGAVGVLQFEVVTSRLANEYGVEAVFDNASIWSARWVSCDDKKKLAEFEKANAGNLAIDAGGNLAYLAPNRVNLGLTQERWPDIVFHETREHSVKL</sequence>
<dbReference type="EMBL" id="AL157959">
    <property type="protein sequence ID" value="CAM08074.1"/>
    <property type="molecule type" value="Genomic_DNA"/>
</dbReference>
<dbReference type="PIR" id="H81928">
    <property type="entry name" value="H81928"/>
</dbReference>
<dbReference type="RefSeq" id="WP_002246042.1">
    <property type="nucleotide sequence ID" value="NC_003116.1"/>
</dbReference>
<dbReference type="SMR" id="Q9JVH7"/>
<dbReference type="EnsemblBacteria" id="CAM08074">
    <property type="protein sequence ID" value="CAM08074"/>
    <property type="gene ID" value="NMA0836"/>
</dbReference>
<dbReference type="KEGG" id="nma:NMA0836"/>
<dbReference type="HOGENOM" id="CLU_002794_2_1_4"/>
<dbReference type="Proteomes" id="UP000000626">
    <property type="component" value="Chromosome"/>
</dbReference>
<dbReference type="GO" id="GO:0005829">
    <property type="term" value="C:cytosol"/>
    <property type="evidence" value="ECO:0007669"/>
    <property type="project" value="TreeGrafter"/>
</dbReference>
<dbReference type="GO" id="GO:0005525">
    <property type="term" value="F:GTP binding"/>
    <property type="evidence" value="ECO:0007669"/>
    <property type="project" value="UniProtKB-UniRule"/>
</dbReference>
<dbReference type="GO" id="GO:0003924">
    <property type="term" value="F:GTPase activity"/>
    <property type="evidence" value="ECO:0007669"/>
    <property type="project" value="InterPro"/>
</dbReference>
<dbReference type="GO" id="GO:0016150">
    <property type="term" value="F:translation release factor activity, codon nonspecific"/>
    <property type="evidence" value="ECO:0007669"/>
    <property type="project" value="TreeGrafter"/>
</dbReference>
<dbReference type="GO" id="GO:0016149">
    <property type="term" value="F:translation release factor activity, codon specific"/>
    <property type="evidence" value="ECO:0007669"/>
    <property type="project" value="UniProtKB-UniRule"/>
</dbReference>
<dbReference type="GO" id="GO:0006449">
    <property type="term" value="P:regulation of translational termination"/>
    <property type="evidence" value="ECO:0007669"/>
    <property type="project" value="UniProtKB-UniRule"/>
</dbReference>
<dbReference type="CDD" id="cd04169">
    <property type="entry name" value="RF3"/>
    <property type="match status" value="1"/>
</dbReference>
<dbReference type="CDD" id="cd03689">
    <property type="entry name" value="RF3_II"/>
    <property type="match status" value="1"/>
</dbReference>
<dbReference type="CDD" id="cd16259">
    <property type="entry name" value="RF3_III"/>
    <property type="match status" value="1"/>
</dbReference>
<dbReference type="FunFam" id="2.40.30.10:FF:000040">
    <property type="entry name" value="Peptide chain release factor 3"/>
    <property type="match status" value="1"/>
</dbReference>
<dbReference type="FunFam" id="3.30.70.3280:FF:000001">
    <property type="entry name" value="Peptide chain release factor 3"/>
    <property type="match status" value="1"/>
</dbReference>
<dbReference type="FunFam" id="3.40.50.300:FF:000542">
    <property type="entry name" value="Peptide chain release factor 3"/>
    <property type="match status" value="1"/>
</dbReference>
<dbReference type="Gene3D" id="3.40.50.300">
    <property type="entry name" value="P-loop containing nucleotide triphosphate hydrolases"/>
    <property type="match status" value="2"/>
</dbReference>
<dbReference type="Gene3D" id="3.30.70.3280">
    <property type="entry name" value="Peptide chain release factor 3, domain III"/>
    <property type="match status" value="1"/>
</dbReference>
<dbReference type="HAMAP" id="MF_00072">
    <property type="entry name" value="Rel_fac_3"/>
    <property type="match status" value="1"/>
</dbReference>
<dbReference type="InterPro" id="IPR053905">
    <property type="entry name" value="EF-G-like_DII"/>
</dbReference>
<dbReference type="InterPro" id="IPR035647">
    <property type="entry name" value="EFG_III/V"/>
</dbReference>
<dbReference type="InterPro" id="IPR031157">
    <property type="entry name" value="G_TR_CS"/>
</dbReference>
<dbReference type="InterPro" id="IPR027417">
    <property type="entry name" value="P-loop_NTPase"/>
</dbReference>
<dbReference type="InterPro" id="IPR004548">
    <property type="entry name" value="PrfC"/>
</dbReference>
<dbReference type="InterPro" id="IPR032090">
    <property type="entry name" value="RF3_C"/>
</dbReference>
<dbReference type="InterPro" id="IPR038467">
    <property type="entry name" value="RF3_dom_3_sf"/>
</dbReference>
<dbReference type="InterPro" id="IPR041732">
    <property type="entry name" value="RF3_GTP-bd"/>
</dbReference>
<dbReference type="InterPro" id="IPR005225">
    <property type="entry name" value="Small_GTP-bd"/>
</dbReference>
<dbReference type="InterPro" id="IPR000795">
    <property type="entry name" value="T_Tr_GTP-bd_dom"/>
</dbReference>
<dbReference type="InterPro" id="IPR009000">
    <property type="entry name" value="Transl_B-barrel_sf"/>
</dbReference>
<dbReference type="NCBIfam" id="TIGR00503">
    <property type="entry name" value="prfC"/>
    <property type="match status" value="1"/>
</dbReference>
<dbReference type="NCBIfam" id="NF001964">
    <property type="entry name" value="PRK00741.1"/>
    <property type="match status" value="1"/>
</dbReference>
<dbReference type="NCBIfam" id="TIGR00231">
    <property type="entry name" value="small_GTP"/>
    <property type="match status" value="1"/>
</dbReference>
<dbReference type="PANTHER" id="PTHR43556">
    <property type="entry name" value="PEPTIDE CHAIN RELEASE FACTOR RF3"/>
    <property type="match status" value="1"/>
</dbReference>
<dbReference type="PANTHER" id="PTHR43556:SF2">
    <property type="entry name" value="PEPTIDE CHAIN RELEASE FACTOR RF3"/>
    <property type="match status" value="1"/>
</dbReference>
<dbReference type="Pfam" id="PF22042">
    <property type="entry name" value="EF-G_D2"/>
    <property type="match status" value="1"/>
</dbReference>
<dbReference type="Pfam" id="PF00009">
    <property type="entry name" value="GTP_EFTU"/>
    <property type="match status" value="1"/>
</dbReference>
<dbReference type="Pfam" id="PF16658">
    <property type="entry name" value="RF3_C"/>
    <property type="match status" value="1"/>
</dbReference>
<dbReference type="PRINTS" id="PR00315">
    <property type="entry name" value="ELONGATNFCT"/>
</dbReference>
<dbReference type="SUPFAM" id="SSF54980">
    <property type="entry name" value="EF-G C-terminal domain-like"/>
    <property type="match status" value="1"/>
</dbReference>
<dbReference type="SUPFAM" id="SSF52540">
    <property type="entry name" value="P-loop containing nucleoside triphosphate hydrolases"/>
    <property type="match status" value="1"/>
</dbReference>
<dbReference type="SUPFAM" id="SSF50447">
    <property type="entry name" value="Translation proteins"/>
    <property type="match status" value="1"/>
</dbReference>
<dbReference type="PROSITE" id="PS00301">
    <property type="entry name" value="G_TR_1"/>
    <property type="match status" value="1"/>
</dbReference>
<dbReference type="PROSITE" id="PS51722">
    <property type="entry name" value="G_TR_2"/>
    <property type="match status" value="1"/>
</dbReference>
<reference key="1">
    <citation type="journal article" date="2000" name="Nature">
        <title>Complete DNA sequence of a serogroup A strain of Neisseria meningitidis Z2491.</title>
        <authorList>
            <person name="Parkhill J."/>
            <person name="Achtman M."/>
            <person name="James K.D."/>
            <person name="Bentley S.D."/>
            <person name="Churcher C.M."/>
            <person name="Klee S.R."/>
            <person name="Morelli G."/>
            <person name="Basham D."/>
            <person name="Brown D."/>
            <person name="Chillingworth T."/>
            <person name="Davies R.M."/>
            <person name="Davis P."/>
            <person name="Devlin K."/>
            <person name="Feltwell T."/>
            <person name="Hamlin N."/>
            <person name="Holroyd S."/>
            <person name="Jagels K."/>
            <person name="Leather S."/>
            <person name="Moule S."/>
            <person name="Mungall K.L."/>
            <person name="Quail M.A."/>
            <person name="Rajandream M.A."/>
            <person name="Rutherford K.M."/>
            <person name="Simmonds M."/>
            <person name="Skelton J."/>
            <person name="Whitehead S."/>
            <person name="Spratt B.G."/>
            <person name="Barrell B.G."/>
        </authorList>
    </citation>
    <scope>NUCLEOTIDE SEQUENCE [LARGE SCALE GENOMIC DNA]</scope>
    <source>
        <strain>DSM 15465 / Z2491</strain>
    </source>
</reference>
<name>RF3_NEIMA</name>
<organism>
    <name type="scientific">Neisseria meningitidis serogroup A / serotype 4A (strain DSM 15465 / Z2491)</name>
    <dbReference type="NCBI Taxonomy" id="122587"/>
    <lineage>
        <taxon>Bacteria</taxon>
        <taxon>Pseudomonadati</taxon>
        <taxon>Pseudomonadota</taxon>
        <taxon>Betaproteobacteria</taxon>
        <taxon>Neisseriales</taxon>
        <taxon>Neisseriaceae</taxon>
        <taxon>Neisseria</taxon>
    </lineage>
</organism>
<keyword id="KW-0963">Cytoplasm</keyword>
<keyword id="KW-0342">GTP-binding</keyword>
<keyword id="KW-0547">Nucleotide-binding</keyword>
<keyword id="KW-0648">Protein biosynthesis</keyword>